<organism>
    <name type="scientific">Daucus carota</name>
    <name type="common">Wild carrot</name>
    <dbReference type="NCBI Taxonomy" id="4039"/>
    <lineage>
        <taxon>Eukaryota</taxon>
        <taxon>Viridiplantae</taxon>
        <taxon>Streptophyta</taxon>
        <taxon>Embryophyta</taxon>
        <taxon>Tracheophyta</taxon>
        <taxon>Spermatophyta</taxon>
        <taxon>Magnoliopsida</taxon>
        <taxon>eudicotyledons</taxon>
        <taxon>Gunneridae</taxon>
        <taxon>Pentapetalae</taxon>
        <taxon>asterids</taxon>
        <taxon>campanulids</taxon>
        <taxon>Apiales</taxon>
        <taxon>Apiaceae</taxon>
        <taxon>Apioideae</taxon>
        <taxon>Scandiceae</taxon>
        <taxon>Daucinae</taxon>
        <taxon>Daucus</taxon>
        <taxon>Daucus sect. Daucus</taxon>
    </lineage>
</organism>
<sequence>MGSKNSASVALFFTLNILFFALVSSTEKCPDPYKPKPKPTPKPTPTPYPSAGKCPRDALKLGVCADVLNLVHNVVIGSPPTLPCCSLLEGLVNLEAAVCLCTAIKANILGKNLNLPIALSLVLNNCGKQVPNGFECT</sequence>
<dbReference type="EMBL" id="X15436">
    <property type="protein sequence ID" value="CAA33476.1"/>
    <property type="molecule type" value="mRNA"/>
</dbReference>
<dbReference type="EMBL" id="X75806">
    <property type="protein sequence ID" value="CAA53441.1"/>
    <property type="molecule type" value="Genomic_DNA"/>
</dbReference>
<dbReference type="EMBL" id="X75807">
    <property type="protein sequence ID" value="CAA53442.1"/>
    <property type="molecule type" value="Genomic_DNA"/>
</dbReference>
<dbReference type="EMBL" id="X75808">
    <property type="protein sequence ID" value="CAA53443.1"/>
    <property type="molecule type" value="Genomic_DNA"/>
</dbReference>
<dbReference type="EMBL" id="X75809">
    <property type="protein sequence ID" value="CAA53444.1"/>
    <property type="molecule type" value="Genomic_DNA"/>
</dbReference>
<dbReference type="EMBL" id="X75810">
    <property type="protein sequence ID" value="CAA53445.1"/>
    <property type="molecule type" value="Genomic_DNA"/>
</dbReference>
<dbReference type="PIR" id="S35714">
    <property type="entry name" value="S35714"/>
</dbReference>
<dbReference type="SMR" id="P14009"/>
<dbReference type="GO" id="GO:0016020">
    <property type="term" value="C:membrane"/>
    <property type="evidence" value="ECO:0007669"/>
    <property type="project" value="UniProtKB-SubCell"/>
</dbReference>
<dbReference type="CDD" id="cd01958">
    <property type="entry name" value="HPS_like"/>
    <property type="match status" value="1"/>
</dbReference>
<dbReference type="FunFam" id="1.10.110.10:FF:000003">
    <property type="entry name" value="pEARLI1-like lipid transfer protein 1"/>
    <property type="match status" value="1"/>
</dbReference>
<dbReference type="Gene3D" id="1.10.110.10">
    <property type="entry name" value="Plant lipid-transfer and hydrophobic proteins"/>
    <property type="match status" value="1"/>
</dbReference>
<dbReference type="InterPro" id="IPR036312">
    <property type="entry name" value="Bifun_inhib/LTP/seed_sf"/>
</dbReference>
<dbReference type="InterPro" id="IPR016140">
    <property type="entry name" value="Bifunc_inhib/LTP/seed_store"/>
</dbReference>
<dbReference type="InterPro" id="IPR027923">
    <property type="entry name" value="Hydrophob_seed_dom"/>
</dbReference>
<dbReference type="InterPro" id="IPR051636">
    <property type="entry name" value="Plant_LTP/defense-related"/>
</dbReference>
<dbReference type="PANTHER" id="PTHR31731">
    <property type="match status" value="1"/>
</dbReference>
<dbReference type="Pfam" id="PF14547">
    <property type="entry name" value="Hydrophob_seed"/>
    <property type="match status" value="1"/>
</dbReference>
<dbReference type="SMART" id="SM00499">
    <property type="entry name" value="AAI"/>
    <property type="match status" value="1"/>
</dbReference>
<dbReference type="SUPFAM" id="SSF47699">
    <property type="entry name" value="Bifunctional inhibitor/lipid-transfer protein/seed storage 2S albumin"/>
    <property type="match status" value="1"/>
</dbReference>
<accession>P14009</accession>
<reference key="1">
    <citation type="journal article" date="1990" name="Planta">
        <title>Gene expression during induction of somatic embryogenesis in carrot cell suspensions.</title>
        <authorList>
            <person name="Aleith F."/>
            <person name="Richter G."/>
        </authorList>
    </citation>
    <scope>NUCLEOTIDE SEQUENCE [MRNA]</scope>
</reference>
<reference key="2">
    <citation type="submission" date="1993-11" db="EMBL/GenBank/DDBJ databases">
        <title>Promoter analysis of embryonic induced genes.</title>
        <authorList>
            <person name="Kaldenhoff R."/>
            <person name="Holk A."/>
            <person name="Richter G."/>
        </authorList>
    </citation>
    <scope>NUCLEOTIDE SEQUENCE [GENOMIC DNA] OF 1-8</scope>
</reference>
<proteinExistence type="evidence at transcript level"/>
<comment type="function">
    <text>May be connected with the initiation of embryogenesis or with the metabolic changes produced by the removal of auxins.</text>
</comment>
<comment type="subcellular location">
    <subcellularLocation>
        <location evidence="3">Membrane</location>
        <topology evidence="3">Single-pass membrane protein</topology>
    </subcellularLocation>
</comment>
<comment type="developmental stage">
    <text>Transiently expressed during early embryogenesis.</text>
</comment>
<comment type="induction">
    <text>By the removal of auxins.</text>
</comment>
<protein>
    <recommendedName>
        <fullName>14 kDa proline-rich protein DC2.15</fullName>
    </recommendedName>
</protein>
<keyword id="KW-0472">Membrane</keyword>
<keyword id="KW-0732">Signal</keyword>
<keyword id="KW-0812">Transmembrane</keyword>
<keyword id="KW-1133">Transmembrane helix</keyword>
<feature type="signal peptide" evidence="1">
    <location>
        <begin position="1"/>
        <end position="25"/>
    </location>
</feature>
<feature type="chain" id="PRO_0000020572" description="14 kDa proline-rich protein DC2.15">
    <location>
        <begin position="26"/>
        <end position="137"/>
    </location>
</feature>
<feature type="transmembrane region" description="Helical" evidence="1">
    <location>
        <begin position="88"/>
        <end position="104"/>
    </location>
</feature>
<feature type="region of interest" description="Disordered" evidence="2">
    <location>
        <begin position="30"/>
        <end position="53"/>
    </location>
</feature>
<feature type="compositionally biased region" description="Pro residues" evidence="2">
    <location>
        <begin position="38"/>
        <end position="48"/>
    </location>
</feature>
<evidence type="ECO:0000255" key="1"/>
<evidence type="ECO:0000256" key="2">
    <source>
        <dbReference type="SAM" id="MobiDB-lite"/>
    </source>
</evidence>
<evidence type="ECO:0000305" key="3"/>
<name>14KD_DAUCA</name>